<reference key="1">
    <citation type="submission" date="2007-10" db="EMBL/GenBank/DDBJ databases">
        <title>Complete sequence of Shewanella pealeana ATCC 700345.</title>
        <authorList>
            <consortium name="US DOE Joint Genome Institute"/>
            <person name="Copeland A."/>
            <person name="Lucas S."/>
            <person name="Lapidus A."/>
            <person name="Barry K."/>
            <person name="Glavina del Rio T."/>
            <person name="Dalin E."/>
            <person name="Tice H."/>
            <person name="Pitluck S."/>
            <person name="Chertkov O."/>
            <person name="Brettin T."/>
            <person name="Bruce D."/>
            <person name="Detter J.C."/>
            <person name="Han C."/>
            <person name="Schmutz J."/>
            <person name="Larimer F."/>
            <person name="Land M."/>
            <person name="Hauser L."/>
            <person name="Kyrpides N."/>
            <person name="Kim E."/>
            <person name="Zhao J.-S.Z."/>
            <person name="Manno D."/>
            <person name="Hawari J."/>
            <person name="Richardson P."/>
        </authorList>
    </citation>
    <scope>NUCLEOTIDE SEQUENCE [LARGE SCALE GENOMIC DNA]</scope>
    <source>
        <strain>ATCC 700345 / ANG-SQ1</strain>
    </source>
</reference>
<proteinExistence type="inferred from homology"/>
<organism>
    <name type="scientific">Shewanella pealeana (strain ATCC 700345 / ANG-SQ1)</name>
    <dbReference type="NCBI Taxonomy" id="398579"/>
    <lineage>
        <taxon>Bacteria</taxon>
        <taxon>Pseudomonadati</taxon>
        <taxon>Pseudomonadota</taxon>
        <taxon>Gammaproteobacteria</taxon>
        <taxon>Alteromonadales</taxon>
        <taxon>Shewanellaceae</taxon>
        <taxon>Shewanella</taxon>
    </lineage>
</organism>
<keyword id="KW-0067">ATP-binding</keyword>
<keyword id="KW-0319">Glycerol metabolism</keyword>
<keyword id="KW-0418">Kinase</keyword>
<keyword id="KW-0547">Nucleotide-binding</keyword>
<keyword id="KW-1185">Reference proteome</keyword>
<keyword id="KW-0808">Transferase</keyword>
<dbReference type="EC" id="2.7.1.30" evidence="1"/>
<dbReference type="EMBL" id="CP000851">
    <property type="protein sequence ID" value="ABV89132.1"/>
    <property type="molecule type" value="Genomic_DNA"/>
</dbReference>
<dbReference type="RefSeq" id="WP_012157014.1">
    <property type="nucleotide sequence ID" value="NC_009901.1"/>
</dbReference>
<dbReference type="SMR" id="A8H995"/>
<dbReference type="STRING" id="398579.Spea_3822"/>
<dbReference type="KEGG" id="spl:Spea_3822"/>
<dbReference type="eggNOG" id="COG0554">
    <property type="taxonomic scope" value="Bacteria"/>
</dbReference>
<dbReference type="HOGENOM" id="CLU_009281_2_3_6"/>
<dbReference type="OrthoDB" id="9805576at2"/>
<dbReference type="UniPathway" id="UPA00618">
    <property type="reaction ID" value="UER00672"/>
</dbReference>
<dbReference type="Proteomes" id="UP000002608">
    <property type="component" value="Chromosome"/>
</dbReference>
<dbReference type="GO" id="GO:0005829">
    <property type="term" value="C:cytosol"/>
    <property type="evidence" value="ECO:0007669"/>
    <property type="project" value="TreeGrafter"/>
</dbReference>
<dbReference type="GO" id="GO:0005524">
    <property type="term" value="F:ATP binding"/>
    <property type="evidence" value="ECO:0007669"/>
    <property type="project" value="UniProtKB-UniRule"/>
</dbReference>
<dbReference type="GO" id="GO:0004370">
    <property type="term" value="F:glycerol kinase activity"/>
    <property type="evidence" value="ECO:0000250"/>
    <property type="project" value="UniProtKB"/>
</dbReference>
<dbReference type="GO" id="GO:0019563">
    <property type="term" value="P:glycerol catabolic process"/>
    <property type="evidence" value="ECO:0007669"/>
    <property type="project" value="UniProtKB-UniRule"/>
</dbReference>
<dbReference type="GO" id="GO:0006071">
    <property type="term" value="P:glycerol metabolic process"/>
    <property type="evidence" value="ECO:0000250"/>
    <property type="project" value="UniProtKB"/>
</dbReference>
<dbReference type="GO" id="GO:0006072">
    <property type="term" value="P:glycerol-3-phosphate metabolic process"/>
    <property type="evidence" value="ECO:0007669"/>
    <property type="project" value="InterPro"/>
</dbReference>
<dbReference type="CDD" id="cd07786">
    <property type="entry name" value="FGGY_EcGK_like"/>
    <property type="match status" value="1"/>
</dbReference>
<dbReference type="FunFam" id="3.30.420.40:FF:000007">
    <property type="entry name" value="Glycerol kinase"/>
    <property type="match status" value="1"/>
</dbReference>
<dbReference type="FunFam" id="3.30.420.40:FF:000008">
    <property type="entry name" value="Glycerol kinase"/>
    <property type="match status" value="1"/>
</dbReference>
<dbReference type="Gene3D" id="3.30.420.40">
    <property type="match status" value="2"/>
</dbReference>
<dbReference type="HAMAP" id="MF_00186">
    <property type="entry name" value="Glycerol_kin"/>
    <property type="match status" value="1"/>
</dbReference>
<dbReference type="InterPro" id="IPR043129">
    <property type="entry name" value="ATPase_NBD"/>
</dbReference>
<dbReference type="InterPro" id="IPR000577">
    <property type="entry name" value="Carb_kinase_FGGY"/>
</dbReference>
<dbReference type="InterPro" id="IPR018483">
    <property type="entry name" value="Carb_kinase_FGGY_CS"/>
</dbReference>
<dbReference type="InterPro" id="IPR018485">
    <property type="entry name" value="FGGY_C"/>
</dbReference>
<dbReference type="InterPro" id="IPR018484">
    <property type="entry name" value="FGGY_N"/>
</dbReference>
<dbReference type="InterPro" id="IPR005999">
    <property type="entry name" value="Glycerol_kin"/>
</dbReference>
<dbReference type="NCBIfam" id="TIGR01311">
    <property type="entry name" value="glycerol_kin"/>
    <property type="match status" value="1"/>
</dbReference>
<dbReference type="NCBIfam" id="NF000756">
    <property type="entry name" value="PRK00047.1"/>
    <property type="match status" value="1"/>
</dbReference>
<dbReference type="PANTHER" id="PTHR10196:SF69">
    <property type="entry name" value="GLYCEROL KINASE"/>
    <property type="match status" value="1"/>
</dbReference>
<dbReference type="PANTHER" id="PTHR10196">
    <property type="entry name" value="SUGAR KINASE"/>
    <property type="match status" value="1"/>
</dbReference>
<dbReference type="Pfam" id="PF02782">
    <property type="entry name" value="FGGY_C"/>
    <property type="match status" value="1"/>
</dbReference>
<dbReference type="Pfam" id="PF00370">
    <property type="entry name" value="FGGY_N"/>
    <property type="match status" value="1"/>
</dbReference>
<dbReference type="PIRSF" id="PIRSF000538">
    <property type="entry name" value="GlpK"/>
    <property type="match status" value="1"/>
</dbReference>
<dbReference type="SUPFAM" id="SSF53067">
    <property type="entry name" value="Actin-like ATPase domain"/>
    <property type="match status" value="2"/>
</dbReference>
<dbReference type="PROSITE" id="PS00933">
    <property type="entry name" value="FGGY_KINASES_1"/>
    <property type="match status" value="1"/>
</dbReference>
<dbReference type="PROSITE" id="PS00445">
    <property type="entry name" value="FGGY_KINASES_2"/>
    <property type="match status" value="1"/>
</dbReference>
<protein>
    <recommendedName>
        <fullName evidence="1">Glycerol kinase</fullName>
        <ecNumber evidence="1">2.7.1.30</ecNumber>
    </recommendedName>
    <alternativeName>
        <fullName evidence="1">ATP:glycerol 3-phosphotransferase</fullName>
    </alternativeName>
    <alternativeName>
        <fullName evidence="1">Glycerokinase</fullName>
        <shortName evidence="1">GK</shortName>
    </alternativeName>
</protein>
<gene>
    <name evidence="1" type="primary">glpK</name>
    <name type="ordered locus">Spea_3822</name>
</gene>
<evidence type="ECO:0000255" key="1">
    <source>
        <dbReference type="HAMAP-Rule" id="MF_00186"/>
    </source>
</evidence>
<name>GLPK_SHEPA</name>
<accession>A8H995</accession>
<comment type="function">
    <text evidence="1">Key enzyme in the regulation of glycerol uptake and metabolism. Catalyzes the phosphorylation of glycerol to yield sn-glycerol 3-phosphate.</text>
</comment>
<comment type="catalytic activity">
    <reaction evidence="1">
        <text>glycerol + ATP = sn-glycerol 3-phosphate + ADP + H(+)</text>
        <dbReference type="Rhea" id="RHEA:21644"/>
        <dbReference type="ChEBI" id="CHEBI:15378"/>
        <dbReference type="ChEBI" id="CHEBI:17754"/>
        <dbReference type="ChEBI" id="CHEBI:30616"/>
        <dbReference type="ChEBI" id="CHEBI:57597"/>
        <dbReference type="ChEBI" id="CHEBI:456216"/>
        <dbReference type="EC" id="2.7.1.30"/>
    </reaction>
</comment>
<comment type="activity regulation">
    <text evidence="1">Inhibited by fructose 1,6-bisphosphate (FBP).</text>
</comment>
<comment type="pathway">
    <text evidence="1">Polyol metabolism; glycerol degradation via glycerol kinase pathway; sn-glycerol 3-phosphate from glycerol: step 1/1.</text>
</comment>
<comment type="similarity">
    <text evidence="1">Belongs to the FGGY kinase family.</text>
</comment>
<sequence length="493" mass="54418">MSKKYIIALDQGTTSSRAIVFDHDTKMVASSQREFSQMYPQPGWVEHDAMEIWASQSSTLIEVLARADIHSEDVAAIGITNQRETTVVWDKVTGKPVYNAIVWQCRRSKAICDELKAQGLEDYIKQTTGLVLDPYFSGTKIKWILDNVEGVRERAEKGELLFGTIDTWLVWKLTEGKVHVTDPTNASRTMLFNIHTQQWDDKLLDAFDIPRSILPEVKPSSAIYGYTRIAGEGSHIAIAGMAGDQQSALFGQLCIEEGMAKNTYGTGCFLLMNTGVEAVQSQHGLLTTIAIGADGGINYALEGSVFMGGATVQWLRDELGLIRDAQDTEYFAKKVEDTNGVYLIPAFVGLGAPYWDPDARGALVGLTRGANRNHIIRAALEAIAYQSRDLLDAMSKDSCVELKQIKVDGGAVANDFLMQFQADITNVEVLRPELTETTALGAAFLAGLAVGFWDSTDELKHKAGIERNFTPQISMQKRDSLYKGWQEAVTRTR</sequence>
<feature type="chain" id="PRO_1000077430" description="Glycerol kinase">
    <location>
        <begin position="1"/>
        <end position="493"/>
    </location>
</feature>
<feature type="binding site" evidence="1">
    <location>
        <position position="13"/>
    </location>
    <ligand>
        <name>ADP</name>
        <dbReference type="ChEBI" id="CHEBI:456216"/>
    </ligand>
</feature>
<feature type="binding site" evidence="1">
    <location>
        <position position="13"/>
    </location>
    <ligand>
        <name>ATP</name>
        <dbReference type="ChEBI" id="CHEBI:30616"/>
    </ligand>
</feature>
<feature type="binding site" evidence="1">
    <location>
        <position position="13"/>
    </location>
    <ligand>
        <name>sn-glycerol 3-phosphate</name>
        <dbReference type="ChEBI" id="CHEBI:57597"/>
    </ligand>
</feature>
<feature type="binding site" evidence="1">
    <location>
        <position position="14"/>
    </location>
    <ligand>
        <name>ATP</name>
        <dbReference type="ChEBI" id="CHEBI:30616"/>
    </ligand>
</feature>
<feature type="binding site" evidence="1">
    <location>
        <position position="15"/>
    </location>
    <ligand>
        <name>ATP</name>
        <dbReference type="ChEBI" id="CHEBI:30616"/>
    </ligand>
</feature>
<feature type="binding site" evidence="1">
    <location>
        <position position="17"/>
    </location>
    <ligand>
        <name>ADP</name>
        <dbReference type="ChEBI" id="CHEBI:456216"/>
    </ligand>
</feature>
<feature type="binding site" evidence="1">
    <location>
        <position position="83"/>
    </location>
    <ligand>
        <name>glycerol</name>
        <dbReference type="ChEBI" id="CHEBI:17754"/>
    </ligand>
</feature>
<feature type="binding site" evidence="1">
    <location>
        <position position="83"/>
    </location>
    <ligand>
        <name>sn-glycerol 3-phosphate</name>
        <dbReference type="ChEBI" id="CHEBI:57597"/>
    </ligand>
</feature>
<feature type="binding site" evidence="1">
    <location>
        <position position="84"/>
    </location>
    <ligand>
        <name>glycerol</name>
        <dbReference type="ChEBI" id="CHEBI:17754"/>
    </ligand>
</feature>
<feature type="binding site" evidence="1">
    <location>
        <position position="84"/>
    </location>
    <ligand>
        <name>sn-glycerol 3-phosphate</name>
        <dbReference type="ChEBI" id="CHEBI:57597"/>
    </ligand>
</feature>
<feature type="binding site" evidence="1">
    <location>
        <position position="135"/>
    </location>
    <ligand>
        <name>glycerol</name>
        <dbReference type="ChEBI" id="CHEBI:17754"/>
    </ligand>
</feature>
<feature type="binding site" evidence="1">
    <location>
        <position position="135"/>
    </location>
    <ligand>
        <name>sn-glycerol 3-phosphate</name>
        <dbReference type="ChEBI" id="CHEBI:57597"/>
    </ligand>
</feature>
<feature type="binding site" evidence="1">
    <location>
        <position position="244"/>
    </location>
    <ligand>
        <name>glycerol</name>
        <dbReference type="ChEBI" id="CHEBI:17754"/>
    </ligand>
</feature>
<feature type="binding site" evidence="1">
    <location>
        <position position="244"/>
    </location>
    <ligand>
        <name>sn-glycerol 3-phosphate</name>
        <dbReference type="ChEBI" id="CHEBI:57597"/>
    </ligand>
</feature>
<feature type="binding site" evidence="1">
    <location>
        <position position="245"/>
    </location>
    <ligand>
        <name>glycerol</name>
        <dbReference type="ChEBI" id="CHEBI:17754"/>
    </ligand>
</feature>
<feature type="binding site" evidence="1">
    <location>
        <position position="266"/>
    </location>
    <ligand>
        <name>ADP</name>
        <dbReference type="ChEBI" id="CHEBI:456216"/>
    </ligand>
</feature>
<feature type="binding site" evidence="1">
    <location>
        <position position="266"/>
    </location>
    <ligand>
        <name>ATP</name>
        <dbReference type="ChEBI" id="CHEBI:30616"/>
    </ligand>
</feature>
<feature type="binding site" evidence="1">
    <location>
        <position position="309"/>
    </location>
    <ligand>
        <name>ADP</name>
        <dbReference type="ChEBI" id="CHEBI:456216"/>
    </ligand>
</feature>
<feature type="binding site" evidence="1">
    <location>
        <position position="309"/>
    </location>
    <ligand>
        <name>ATP</name>
        <dbReference type="ChEBI" id="CHEBI:30616"/>
    </ligand>
</feature>
<feature type="binding site" evidence="1">
    <location>
        <position position="313"/>
    </location>
    <ligand>
        <name>ATP</name>
        <dbReference type="ChEBI" id="CHEBI:30616"/>
    </ligand>
</feature>
<feature type="binding site" evidence="1">
    <location>
        <position position="410"/>
    </location>
    <ligand>
        <name>ADP</name>
        <dbReference type="ChEBI" id="CHEBI:456216"/>
    </ligand>
</feature>
<feature type="binding site" evidence="1">
    <location>
        <position position="410"/>
    </location>
    <ligand>
        <name>ATP</name>
        <dbReference type="ChEBI" id="CHEBI:30616"/>
    </ligand>
</feature>
<feature type="binding site" evidence="1">
    <location>
        <position position="414"/>
    </location>
    <ligand>
        <name>ADP</name>
        <dbReference type="ChEBI" id="CHEBI:456216"/>
    </ligand>
</feature>